<organism>
    <name type="scientific">Nitratidesulfovibrio vulgaris (strain DSM 19637 / Miyazaki F)</name>
    <name type="common">Desulfovibrio vulgaris</name>
    <dbReference type="NCBI Taxonomy" id="883"/>
    <lineage>
        <taxon>Bacteria</taxon>
        <taxon>Pseudomonadati</taxon>
        <taxon>Thermodesulfobacteriota</taxon>
        <taxon>Desulfovibrionia</taxon>
        <taxon>Desulfovibrionales</taxon>
        <taxon>Desulfovibrionaceae</taxon>
        <taxon>Nitratidesulfovibrio</taxon>
    </lineage>
</organism>
<reference key="1">
    <citation type="submission" date="2008-10" db="EMBL/GenBank/DDBJ databases">
        <title>Complete sequence of Desulfovibrio vulgaris str. 'Miyazaki F'.</title>
        <authorList>
            <person name="Lucas S."/>
            <person name="Copeland A."/>
            <person name="Lapidus A."/>
            <person name="Glavina del Rio T."/>
            <person name="Dalin E."/>
            <person name="Tice H."/>
            <person name="Bruce D."/>
            <person name="Goodwin L."/>
            <person name="Pitluck S."/>
            <person name="Sims D."/>
            <person name="Brettin T."/>
            <person name="Detter J.C."/>
            <person name="Han C."/>
            <person name="Larimer F."/>
            <person name="Land M."/>
            <person name="Hauser L."/>
            <person name="Kyrpides N."/>
            <person name="Mikhailova N."/>
            <person name="Hazen T.C."/>
            <person name="Richardson P."/>
        </authorList>
    </citation>
    <scope>NUCLEOTIDE SEQUENCE [LARGE SCALE GENOMIC DNA]</scope>
    <source>
        <strain>DSM 19637 / Miyazaki F</strain>
    </source>
</reference>
<name>GUAA_NITV9</name>
<accession>B8DNB9</accession>
<dbReference type="EC" id="6.3.5.2" evidence="1"/>
<dbReference type="EMBL" id="CP001197">
    <property type="protein sequence ID" value="ACL10061.1"/>
    <property type="molecule type" value="Genomic_DNA"/>
</dbReference>
<dbReference type="SMR" id="B8DNB9"/>
<dbReference type="STRING" id="883.DvMF_3125"/>
<dbReference type="MEROPS" id="C26.A07"/>
<dbReference type="KEGG" id="dvm:DvMF_3125"/>
<dbReference type="eggNOG" id="COG0518">
    <property type="taxonomic scope" value="Bacteria"/>
</dbReference>
<dbReference type="eggNOG" id="COG0519">
    <property type="taxonomic scope" value="Bacteria"/>
</dbReference>
<dbReference type="HOGENOM" id="CLU_014340_0_5_7"/>
<dbReference type="OrthoDB" id="9802219at2"/>
<dbReference type="UniPathway" id="UPA00189">
    <property type="reaction ID" value="UER00296"/>
</dbReference>
<dbReference type="GO" id="GO:0005829">
    <property type="term" value="C:cytosol"/>
    <property type="evidence" value="ECO:0007669"/>
    <property type="project" value="TreeGrafter"/>
</dbReference>
<dbReference type="GO" id="GO:0005524">
    <property type="term" value="F:ATP binding"/>
    <property type="evidence" value="ECO:0007669"/>
    <property type="project" value="UniProtKB-UniRule"/>
</dbReference>
<dbReference type="GO" id="GO:0003921">
    <property type="term" value="F:GMP synthase activity"/>
    <property type="evidence" value="ECO:0007669"/>
    <property type="project" value="InterPro"/>
</dbReference>
<dbReference type="CDD" id="cd01742">
    <property type="entry name" value="GATase1_GMP_Synthase"/>
    <property type="match status" value="1"/>
</dbReference>
<dbReference type="CDD" id="cd01997">
    <property type="entry name" value="GMP_synthase_C"/>
    <property type="match status" value="1"/>
</dbReference>
<dbReference type="FunFam" id="3.30.300.10:FF:000002">
    <property type="entry name" value="GMP synthase [glutamine-hydrolyzing]"/>
    <property type="match status" value="1"/>
</dbReference>
<dbReference type="FunFam" id="3.40.50.620:FF:000001">
    <property type="entry name" value="GMP synthase [glutamine-hydrolyzing]"/>
    <property type="match status" value="1"/>
</dbReference>
<dbReference type="FunFam" id="3.40.50.880:FF:000001">
    <property type="entry name" value="GMP synthase [glutamine-hydrolyzing]"/>
    <property type="match status" value="1"/>
</dbReference>
<dbReference type="Gene3D" id="3.30.300.10">
    <property type="match status" value="1"/>
</dbReference>
<dbReference type="Gene3D" id="3.40.50.880">
    <property type="match status" value="1"/>
</dbReference>
<dbReference type="Gene3D" id="3.40.50.620">
    <property type="entry name" value="HUPs"/>
    <property type="match status" value="1"/>
</dbReference>
<dbReference type="HAMAP" id="MF_00344">
    <property type="entry name" value="GMP_synthase"/>
    <property type="match status" value="1"/>
</dbReference>
<dbReference type="InterPro" id="IPR029062">
    <property type="entry name" value="Class_I_gatase-like"/>
</dbReference>
<dbReference type="InterPro" id="IPR017926">
    <property type="entry name" value="GATASE"/>
</dbReference>
<dbReference type="InterPro" id="IPR001674">
    <property type="entry name" value="GMP_synth_C"/>
</dbReference>
<dbReference type="InterPro" id="IPR004739">
    <property type="entry name" value="GMP_synth_GATase"/>
</dbReference>
<dbReference type="InterPro" id="IPR022955">
    <property type="entry name" value="GMP_synthase"/>
</dbReference>
<dbReference type="InterPro" id="IPR025777">
    <property type="entry name" value="GMPS_ATP_PPase_dom"/>
</dbReference>
<dbReference type="InterPro" id="IPR022310">
    <property type="entry name" value="NAD/GMP_synthase"/>
</dbReference>
<dbReference type="InterPro" id="IPR014729">
    <property type="entry name" value="Rossmann-like_a/b/a_fold"/>
</dbReference>
<dbReference type="NCBIfam" id="TIGR00884">
    <property type="entry name" value="guaA_Cterm"/>
    <property type="match status" value="1"/>
</dbReference>
<dbReference type="NCBIfam" id="TIGR00888">
    <property type="entry name" value="guaA_Nterm"/>
    <property type="match status" value="1"/>
</dbReference>
<dbReference type="NCBIfam" id="NF000848">
    <property type="entry name" value="PRK00074.1"/>
    <property type="match status" value="1"/>
</dbReference>
<dbReference type="PANTHER" id="PTHR11922:SF2">
    <property type="entry name" value="GMP SYNTHASE [GLUTAMINE-HYDROLYZING]"/>
    <property type="match status" value="1"/>
</dbReference>
<dbReference type="PANTHER" id="PTHR11922">
    <property type="entry name" value="GMP SYNTHASE-RELATED"/>
    <property type="match status" value="1"/>
</dbReference>
<dbReference type="Pfam" id="PF00117">
    <property type="entry name" value="GATase"/>
    <property type="match status" value="1"/>
</dbReference>
<dbReference type="Pfam" id="PF00958">
    <property type="entry name" value="GMP_synt_C"/>
    <property type="match status" value="1"/>
</dbReference>
<dbReference type="Pfam" id="PF02540">
    <property type="entry name" value="NAD_synthase"/>
    <property type="match status" value="1"/>
</dbReference>
<dbReference type="PRINTS" id="PR00096">
    <property type="entry name" value="GATASE"/>
</dbReference>
<dbReference type="SUPFAM" id="SSF52402">
    <property type="entry name" value="Adenine nucleotide alpha hydrolases-like"/>
    <property type="match status" value="1"/>
</dbReference>
<dbReference type="SUPFAM" id="SSF52317">
    <property type="entry name" value="Class I glutamine amidotransferase-like"/>
    <property type="match status" value="1"/>
</dbReference>
<dbReference type="SUPFAM" id="SSF54810">
    <property type="entry name" value="GMP synthetase C-terminal dimerisation domain"/>
    <property type="match status" value="1"/>
</dbReference>
<dbReference type="PROSITE" id="PS51273">
    <property type="entry name" value="GATASE_TYPE_1"/>
    <property type="match status" value="1"/>
</dbReference>
<dbReference type="PROSITE" id="PS51553">
    <property type="entry name" value="GMPS_ATP_PPASE"/>
    <property type="match status" value="1"/>
</dbReference>
<keyword id="KW-0067">ATP-binding</keyword>
<keyword id="KW-0315">Glutamine amidotransferase</keyword>
<keyword id="KW-0332">GMP biosynthesis</keyword>
<keyword id="KW-0436">Ligase</keyword>
<keyword id="KW-0547">Nucleotide-binding</keyword>
<keyword id="KW-0658">Purine biosynthesis</keyword>
<proteinExistence type="inferred from homology"/>
<evidence type="ECO:0000255" key="1">
    <source>
        <dbReference type="HAMAP-Rule" id="MF_00344"/>
    </source>
</evidence>
<feature type="chain" id="PRO_1000120275" description="GMP synthase [glutamine-hydrolyzing]">
    <location>
        <begin position="1"/>
        <end position="515"/>
    </location>
</feature>
<feature type="domain" description="Glutamine amidotransferase type-1" evidence="1">
    <location>
        <begin position="6"/>
        <end position="198"/>
    </location>
</feature>
<feature type="domain" description="GMPS ATP-PPase" evidence="1">
    <location>
        <begin position="199"/>
        <end position="390"/>
    </location>
</feature>
<feature type="active site" description="Nucleophile" evidence="1">
    <location>
        <position position="83"/>
    </location>
</feature>
<feature type="active site" evidence="1">
    <location>
        <position position="172"/>
    </location>
</feature>
<feature type="active site" evidence="1">
    <location>
        <position position="174"/>
    </location>
</feature>
<feature type="binding site" evidence="1">
    <location>
        <begin position="226"/>
        <end position="232"/>
    </location>
    <ligand>
        <name>ATP</name>
        <dbReference type="ChEBI" id="CHEBI:30616"/>
    </ligand>
</feature>
<protein>
    <recommendedName>
        <fullName evidence="1">GMP synthase [glutamine-hydrolyzing]</fullName>
        <ecNumber evidence="1">6.3.5.2</ecNumber>
    </recommendedName>
    <alternativeName>
        <fullName evidence="1">GMP synthetase</fullName>
    </alternativeName>
    <alternativeName>
        <fullName evidence="1">Glutamine amidotransferase</fullName>
    </alternativeName>
</protein>
<sequence>MEAQTKVIIIDYGSQVTQLIARRVREAGVYSEIHPCIVTADQVRAMKPAAVILSGGPASVGEADAPTLEKGLLELGVPVLAICYGMQLLGHNLGGQLATSETREYGPADLTLLGDCPLWDGIDKSATTRVWMSHGDKVKTPPPGFAVVGRTATLDVAAMADDARRIYAVQFHPEVHHTEEGTRIINNFLFHVAKLKADWTMSSFVERAIKEMAETVGDRHVVCALSGGIDSTVVAVLLHKAIGKRLHCIFVDNGVLRLNEGQEVVDYLREHFDLNLKYVQAQRRFLDKLEGVEDPEQKRKIIGYTFIEVFDEEAKALGHVDFLAQGTLYPDVIESVSHKGPSAVIKSHHNVGGLPEKMNLKLIEPLRELFKDEVRKVAGELGLPDFIIWRHPFPGPGLAIRVIGEITEERLDILRKADKIVQAELMSSGWYRKVWQGFAVLLPLKTVGVMGDGRTYEHVIALRIVDSVDAMTADWARLPSELLERISSRIINEVKGVNRVVYDISSKPPSTIEWE</sequence>
<comment type="function">
    <text evidence="1">Catalyzes the synthesis of GMP from XMP.</text>
</comment>
<comment type="catalytic activity">
    <reaction evidence="1">
        <text>XMP + L-glutamine + ATP + H2O = GMP + L-glutamate + AMP + diphosphate + 2 H(+)</text>
        <dbReference type="Rhea" id="RHEA:11680"/>
        <dbReference type="ChEBI" id="CHEBI:15377"/>
        <dbReference type="ChEBI" id="CHEBI:15378"/>
        <dbReference type="ChEBI" id="CHEBI:29985"/>
        <dbReference type="ChEBI" id="CHEBI:30616"/>
        <dbReference type="ChEBI" id="CHEBI:33019"/>
        <dbReference type="ChEBI" id="CHEBI:57464"/>
        <dbReference type="ChEBI" id="CHEBI:58115"/>
        <dbReference type="ChEBI" id="CHEBI:58359"/>
        <dbReference type="ChEBI" id="CHEBI:456215"/>
        <dbReference type="EC" id="6.3.5.2"/>
    </reaction>
</comment>
<comment type="pathway">
    <text evidence="1">Purine metabolism; GMP biosynthesis; GMP from XMP (L-Gln route): step 1/1.</text>
</comment>
<comment type="subunit">
    <text evidence="1">Homodimer.</text>
</comment>
<gene>
    <name evidence="1" type="primary">guaA</name>
    <name type="ordered locus">DvMF_3125</name>
</gene>